<name>RPP30_DICDI</name>
<gene>
    <name type="primary">drpp30</name>
    <name type="synonym">rpp1</name>
    <name type="synonym">rpp30</name>
    <name type="ORF">DDB_G0269980</name>
</gene>
<protein>
    <recommendedName>
        <fullName>Ribonuclease P protein subunit drpp30</fullName>
        <ecNumber>3.1.26.5</ecNumber>
    </recommendedName>
    <alternativeName>
        <fullName>RNaseP protein 1</fullName>
    </alternativeName>
</protein>
<sequence length="366" mass="40745">MVYYDLNIDSSLPEPKIKSMLSLHTKYGYDSVAITHTVEGKIGYKDVCKIKKIQIEDDSEKSTSSGWMKMGDSNKTIKQYTRLQVICKTMAEFQMITANNPVVQSYDIISVVPYDVSVFNAACNSNEIDIITIDTFSKFIIKPERVRQCIAKGIFIEILYGNLFGIDADRIAFFQIASSLVRSSFGKNIILSSSGKSSTTLRSPYDLSNLGHLFGLTFDQAKAAVSKHPHTAVLHAITRRTKGIATVTDPNLLKDLELWKLERKEDTQPTNNNIPHEKHINKESTGKETIPKPTTTTTTTTTTTTTAKTKTPTPTPTTEKTPSIPTQPPQKPTAKSNKKTTTNTTSTAQKQGKMDIDIDNNKRKRE</sequence>
<evidence type="ECO:0000250" key="1"/>
<evidence type="ECO:0000256" key="2">
    <source>
        <dbReference type="SAM" id="MobiDB-lite"/>
    </source>
</evidence>
<evidence type="ECO:0000305" key="3"/>
<comment type="function">
    <text evidence="1">Component of ribonuclease P, a protein complex that generates mature tRNA molecules by cleaving their 5'-ends.</text>
</comment>
<comment type="catalytic activity">
    <reaction>
        <text>Endonucleolytic cleavage of RNA, removing 5'-extranucleotides from tRNA precursor.</text>
        <dbReference type="EC" id="3.1.26.5"/>
    </reaction>
</comment>
<comment type="subcellular location">
    <subcellularLocation>
        <location evidence="3">Nucleus</location>
    </subcellularLocation>
</comment>
<comment type="similarity">
    <text evidence="3">Belongs to the eukaryotic/archaeal RNase P protein component 3 family.</text>
</comment>
<accession>Q3ZE13</accession>
<accession>Q55CN7</accession>
<reference key="1">
    <citation type="submission" date="2005-02" db="EMBL/GenBank/DDBJ databases">
        <title>Cloning and characterization of drpp1.</title>
        <authorList>
            <person name="Vourekas A."/>
            <person name="Kalavrizioti D."/>
            <person name="Zarkadis I.K."/>
            <person name="Stathopoulos C."/>
            <person name="Drainas D."/>
        </authorList>
    </citation>
    <scope>NUCLEOTIDE SEQUENCE [MRNA]</scope>
    <source>
        <strain>AX4</strain>
    </source>
</reference>
<reference key="2">
    <citation type="journal article" date="2005" name="Nature">
        <title>The genome of the social amoeba Dictyostelium discoideum.</title>
        <authorList>
            <person name="Eichinger L."/>
            <person name="Pachebat J.A."/>
            <person name="Gloeckner G."/>
            <person name="Rajandream M.A."/>
            <person name="Sucgang R."/>
            <person name="Berriman M."/>
            <person name="Song J."/>
            <person name="Olsen R."/>
            <person name="Szafranski K."/>
            <person name="Xu Q."/>
            <person name="Tunggal B."/>
            <person name="Kummerfeld S."/>
            <person name="Madera M."/>
            <person name="Konfortov B.A."/>
            <person name="Rivero F."/>
            <person name="Bankier A.T."/>
            <person name="Lehmann R."/>
            <person name="Hamlin N."/>
            <person name="Davies R."/>
            <person name="Gaudet P."/>
            <person name="Fey P."/>
            <person name="Pilcher K."/>
            <person name="Chen G."/>
            <person name="Saunders D."/>
            <person name="Sodergren E.J."/>
            <person name="Davis P."/>
            <person name="Kerhornou A."/>
            <person name="Nie X."/>
            <person name="Hall N."/>
            <person name="Anjard C."/>
            <person name="Hemphill L."/>
            <person name="Bason N."/>
            <person name="Farbrother P."/>
            <person name="Desany B."/>
            <person name="Just E."/>
            <person name="Morio T."/>
            <person name="Rost R."/>
            <person name="Churcher C.M."/>
            <person name="Cooper J."/>
            <person name="Haydock S."/>
            <person name="van Driessche N."/>
            <person name="Cronin A."/>
            <person name="Goodhead I."/>
            <person name="Muzny D.M."/>
            <person name="Mourier T."/>
            <person name="Pain A."/>
            <person name="Lu M."/>
            <person name="Harper D."/>
            <person name="Lindsay R."/>
            <person name="Hauser H."/>
            <person name="James K.D."/>
            <person name="Quiles M."/>
            <person name="Madan Babu M."/>
            <person name="Saito T."/>
            <person name="Buchrieser C."/>
            <person name="Wardroper A."/>
            <person name="Felder M."/>
            <person name="Thangavelu M."/>
            <person name="Johnson D."/>
            <person name="Knights A."/>
            <person name="Loulseged H."/>
            <person name="Mungall K.L."/>
            <person name="Oliver K."/>
            <person name="Price C."/>
            <person name="Quail M.A."/>
            <person name="Urushihara H."/>
            <person name="Hernandez J."/>
            <person name="Rabbinowitsch E."/>
            <person name="Steffen D."/>
            <person name="Sanders M."/>
            <person name="Ma J."/>
            <person name="Kohara Y."/>
            <person name="Sharp S."/>
            <person name="Simmonds M.N."/>
            <person name="Spiegler S."/>
            <person name="Tivey A."/>
            <person name="Sugano S."/>
            <person name="White B."/>
            <person name="Walker D."/>
            <person name="Woodward J.R."/>
            <person name="Winckler T."/>
            <person name="Tanaka Y."/>
            <person name="Shaulsky G."/>
            <person name="Schleicher M."/>
            <person name="Weinstock G.M."/>
            <person name="Rosenthal A."/>
            <person name="Cox E.C."/>
            <person name="Chisholm R.L."/>
            <person name="Gibbs R.A."/>
            <person name="Loomis W.F."/>
            <person name="Platzer M."/>
            <person name="Kay R.R."/>
            <person name="Williams J.G."/>
            <person name="Dear P.H."/>
            <person name="Noegel A.A."/>
            <person name="Barrell B.G."/>
            <person name="Kuspa A."/>
        </authorList>
    </citation>
    <scope>NUCLEOTIDE SEQUENCE [LARGE SCALE GENOMIC DNA]</scope>
    <source>
        <strain>AX4</strain>
    </source>
</reference>
<proteinExistence type="evidence at transcript level"/>
<keyword id="KW-0378">Hydrolase</keyword>
<keyword id="KW-0539">Nucleus</keyword>
<keyword id="KW-1185">Reference proteome</keyword>
<keyword id="KW-0819">tRNA processing</keyword>
<dbReference type="EC" id="3.1.26.5"/>
<dbReference type="EMBL" id="AY940192">
    <property type="protein sequence ID" value="AAY18218.1"/>
    <property type="molecule type" value="mRNA"/>
</dbReference>
<dbReference type="EMBL" id="AAFI02000005">
    <property type="protein sequence ID" value="EAL72340.1"/>
    <property type="molecule type" value="Genomic_DNA"/>
</dbReference>
<dbReference type="RefSeq" id="XP_646444.1">
    <property type="nucleotide sequence ID" value="XM_641352.1"/>
</dbReference>
<dbReference type="SMR" id="Q3ZE13"/>
<dbReference type="FunCoup" id="Q3ZE13">
    <property type="interactions" value="279"/>
</dbReference>
<dbReference type="STRING" id="44689.Q3ZE13"/>
<dbReference type="GlyGen" id="Q3ZE13">
    <property type="glycosylation" value="1 site"/>
</dbReference>
<dbReference type="PaxDb" id="44689-DDB0232069"/>
<dbReference type="EnsemblProtists" id="EAL72340">
    <property type="protein sequence ID" value="EAL72340"/>
    <property type="gene ID" value="DDB_G0269980"/>
</dbReference>
<dbReference type="GeneID" id="8617403"/>
<dbReference type="KEGG" id="ddi:DDB_G0269980"/>
<dbReference type="dictyBase" id="DDB_G0269980">
    <property type="gene designation" value="drpp30"/>
</dbReference>
<dbReference type="VEuPathDB" id="AmoebaDB:DDB_G0269980"/>
<dbReference type="eggNOG" id="KOG2363">
    <property type="taxonomic scope" value="Eukaryota"/>
</dbReference>
<dbReference type="HOGENOM" id="CLU_757427_0_0_1"/>
<dbReference type="InParanoid" id="Q3ZE13"/>
<dbReference type="OMA" id="FNAACNS"/>
<dbReference type="PhylomeDB" id="Q3ZE13"/>
<dbReference type="PRO" id="PR:Q3ZE13"/>
<dbReference type="Proteomes" id="UP000002195">
    <property type="component" value="Chromosome 1"/>
</dbReference>
<dbReference type="GO" id="GO:0005655">
    <property type="term" value="C:nucleolar ribonuclease P complex"/>
    <property type="evidence" value="ECO:0000314"/>
    <property type="project" value="dictyBase"/>
</dbReference>
<dbReference type="GO" id="GO:0000172">
    <property type="term" value="C:ribonuclease MRP complex"/>
    <property type="evidence" value="ECO:0000250"/>
    <property type="project" value="dictyBase"/>
</dbReference>
<dbReference type="GO" id="GO:0004526">
    <property type="term" value="F:ribonuclease P activity"/>
    <property type="evidence" value="ECO:0000314"/>
    <property type="project" value="dictyBase"/>
</dbReference>
<dbReference type="GO" id="GO:0033204">
    <property type="term" value="F:ribonuclease P RNA binding"/>
    <property type="evidence" value="ECO:0000353"/>
    <property type="project" value="dictyBase"/>
</dbReference>
<dbReference type="GO" id="GO:0003723">
    <property type="term" value="F:RNA binding"/>
    <property type="evidence" value="ECO:0000318"/>
    <property type="project" value="GO_Central"/>
</dbReference>
<dbReference type="GO" id="GO:0000049">
    <property type="term" value="F:tRNA binding"/>
    <property type="evidence" value="ECO:0000314"/>
    <property type="project" value="dictyBase"/>
</dbReference>
<dbReference type="GO" id="GO:0006364">
    <property type="term" value="P:rRNA processing"/>
    <property type="evidence" value="ECO:0000250"/>
    <property type="project" value="dictyBase"/>
</dbReference>
<dbReference type="GO" id="GO:0008033">
    <property type="term" value="P:tRNA processing"/>
    <property type="evidence" value="ECO:0000314"/>
    <property type="project" value="dictyBase"/>
</dbReference>
<dbReference type="FunFam" id="3.20.20.140:FF:000268">
    <property type="entry name" value="Ribonuclease P protein subunit drpp30"/>
    <property type="match status" value="1"/>
</dbReference>
<dbReference type="Gene3D" id="3.20.20.140">
    <property type="entry name" value="Metal-dependent hydrolases"/>
    <property type="match status" value="1"/>
</dbReference>
<dbReference type="InterPro" id="IPR016195">
    <property type="entry name" value="Pol/histidinol_Pase-like"/>
</dbReference>
<dbReference type="InterPro" id="IPR002738">
    <property type="entry name" value="RNase_P_p30"/>
</dbReference>
<dbReference type="PANTHER" id="PTHR13031:SF0">
    <property type="entry name" value="RIBONUCLEASE P PROTEIN SUBUNIT P30"/>
    <property type="match status" value="1"/>
</dbReference>
<dbReference type="PANTHER" id="PTHR13031">
    <property type="entry name" value="RIBONUCLEASE P SUBUNIT P30"/>
    <property type="match status" value="1"/>
</dbReference>
<dbReference type="Pfam" id="PF01876">
    <property type="entry name" value="RNase_P_p30"/>
    <property type="match status" value="1"/>
</dbReference>
<dbReference type="SUPFAM" id="SSF89550">
    <property type="entry name" value="PHP domain-like"/>
    <property type="match status" value="1"/>
</dbReference>
<organism>
    <name type="scientific">Dictyostelium discoideum</name>
    <name type="common">Social amoeba</name>
    <dbReference type="NCBI Taxonomy" id="44689"/>
    <lineage>
        <taxon>Eukaryota</taxon>
        <taxon>Amoebozoa</taxon>
        <taxon>Evosea</taxon>
        <taxon>Eumycetozoa</taxon>
        <taxon>Dictyostelia</taxon>
        <taxon>Dictyosteliales</taxon>
        <taxon>Dictyosteliaceae</taxon>
        <taxon>Dictyostelium</taxon>
    </lineage>
</organism>
<feature type="chain" id="PRO_0000240431" description="Ribonuclease P protein subunit drpp30">
    <location>
        <begin position="1"/>
        <end position="366"/>
    </location>
</feature>
<feature type="region of interest" description="Disordered" evidence="2">
    <location>
        <begin position="265"/>
        <end position="366"/>
    </location>
</feature>
<feature type="compositionally biased region" description="Basic and acidic residues" evidence="2">
    <location>
        <begin position="275"/>
        <end position="290"/>
    </location>
</feature>
<feature type="compositionally biased region" description="Low complexity" evidence="2">
    <location>
        <begin position="291"/>
        <end position="324"/>
    </location>
</feature>
<feature type="compositionally biased region" description="Low complexity" evidence="2">
    <location>
        <begin position="333"/>
        <end position="351"/>
    </location>
</feature>
<feature type="compositionally biased region" description="Basic and acidic residues" evidence="2">
    <location>
        <begin position="352"/>
        <end position="366"/>
    </location>
</feature>